<keyword id="KW-0456">Lyase</keyword>
<protein>
    <recommendedName>
        <fullName>Trichodiene synthase</fullName>
        <ecNumber>4.2.3.6</ecNumber>
    </recommendedName>
    <alternativeName>
        <fullName>Sesquiterpene cyclase</fullName>
        <shortName>TS</shortName>
    </alternativeName>
</protein>
<comment type="function">
    <text>TS is a member of the terpene cyclase group of enzymes. It catalyzes the isomerization and cyclization of farnesyl pyro-phosphate to form trichodiene, the first cyclic intermediate in the biosynthetic pathway for trichothecenes. It serves to branch trichothecene biosynthesis from the isoprenoid pathway.</text>
</comment>
<comment type="catalytic activity">
    <reaction>
        <text>(2E,6E)-farnesyl diphosphate = trichodiene + diphosphate</text>
        <dbReference type="Rhea" id="RHEA:12052"/>
        <dbReference type="ChEBI" id="CHEBI:15861"/>
        <dbReference type="ChEBI" id="CHEBI:33019"/>
        <dbReference type="ChEBI" id="CHEBI:175763"/>
        <dbReference type="EC" id="4.2.3.6"/>
    </reaction>
</comment>
<comment type="pathway">
    <text>Sesquiterpene biosynthesis; trichothecene biosynthesis.</text>
</comment>
<comment type="miscellaneous">
    <text>Trichothecenes are sesquiterpenoid toxins that act by inhibiting protein biosynthesis.</text>
</comment>
<comment type="similarity">
    <text evidence="1">Belongs to the trichodiene synthase family.</text>
</comment>
<dbReference type="EC" id="4.2.3.6"/>
<dbReference type="EMBL" id="AY102589">
    <property type="protein sequence ID" value="AAM48926.1"/>
    <property type="molecule type" value="Genomic_DNA"/>
</dbReference>
<dbReference type="EMBL" id="AY102596">
    <property type="protein sequence ID" value="AAM48982.1"/>
    <property type="molecule type" value="Genomic_DNA"/>
</dbReference>
<dbReference type="SMR" id="Q8NIH0"/>
<dbReference type="UniPathway" id="UPA00267"/>
<dbReference type="GO" id="GO:0045482">
    <property type="term" value="F:trichodiene synthase activity"/>
    <property type="evidence" value="ECO:0007669"/>
    <property type="project" value="UniProtKB-EC"/>
</dbReference>
<dbReference type="GO" id="GO:0016106">
    <property type="term" value="P:sesquiterpenoid biosynthetic process"/>
    <property type="evidence" value="ECO:0007669"/>
    <property type="project" value="InterPro"/>
</dbReference>
<dbReference type="Gene3D" id="1.10.600.10">
    <property type="entry name" value="Farnesyl Diphosphate Synthase"/>
    <property type="match status" value="1"/>
</dbReference>
<dbReference type="InterPro" id="IPR008949">
    <property type="entry name" value="Isoprenoid_synthase_dom_sf"/>
</dbReference>
<dbReference type="InterPro" id="IPR010458">
    <property type="entry name" value="TRI5_ascomyc"/>
</dbReference>
<dbReference type="InterPro" id="IPR024652">
    <property type="entry name" value="Trichodiene_synth"/>
</dbReference>
<dbReference type="Pfam" id="PF06330">
    <property type="entry name" value="TRI5"/>
    <property type="match status" value="1"/>
</dbReference>
<dbReference type="PIRSF" id="PIRSF001388">
    <property type="entry name" value="TRI5"/>
    <property type="match status" value="1"/>
</dbReference>
<dbReference type="SFLD" id="SFLDS00005">
    <property type="entry name" value="Isoprenoid_Synthase_Type_I"/>
    <property type="match status" value="1"/>
</dbReference>
<dbReference type="SFLD" id="SFLDG01021">
    <property type="entry name" value="Trichodiene_Synthase_Like"/>
    <property type="match status" value="1"/>
</dbReference>
<dbReference type="SUPFAM" id="SSF48576">
    <property type="entry name" value="Terpenoid synthases"/>
    <property type="match status" value="1"/>
</dbReference>
<accession>Q8NIH0</accession>
<reference key="1">
    <citation type="journal article" date="2002" name="Proc. Natl. Acad. Sci. U.S.A.">
        <title>Ancestral polymorphism and adaptive evolution in the trichothecene mycotoxin gene cluster of phytopathogenic Fusarium.</title>
        <authorList>
            <person name="Ward T.J."/>
            <person name="Bielawski J.P."/>
            <person name="Kistler H.C."/>
            <person name="Sullivan E."/>
            <person name="O'Donnell K."/>
        </authorList>
    </citation>
    <scope>NUCLEOTIDE SEQUENCE [GENOMIC DNA]</scope>
    <source>
        <strain>CBS 110244 / NRRL 2903</strain>
        <strain>CBS 110246 / FRC-R-6964 / NRRL 28718</strain>
    </source>
</reference>
<gene>
    <name type="primary">TRI5</name>
</gene>
<organism>
    <name type="scientific">Fusarium austroamericanum</name>
    <dbReference type="NCBI Taxonomy" id="282268"/>
    <lineage>
        <taxon>Eukaryota</taxon>
        <taxon>Fungi</taxon>
        <taxon>Dikarya</taxon>
        <taxon>Ascomycota</taxon>
        <taxon>Pezizomycotina</taxon>
        <taxon>Sordariomycetes</taxon>
        <taxon>Hypocreomycetidae</taxon>
        <taxon>Hypocreales</taxon>
        <taxon>Nectriaceae</taxon>
        <taxon>Fusarium</taxon>
    </lineage>
</organism>
<sequence>MENFPTEYFLNTSVRLLEYIRYRDSNYTREERIENLHYAYNKAAHHFAQPRQQQMLKVDPKRLQASLQTIVGMVVYSWAKVSKECMADLSIHYTYTLVLDDSSDDPHPAMLNYFDDLQAGREQSHPWWALVNEHFPNVLRHFGPFCSLNLIRSTMDFFEGCWIEQYNFGGFPGSDDYPQFLRRMNGLGHCVGASLWPKDLFDERKNFLEITTAVAQMENWMVWVNDLMSFYKEFDDERDQISLVKNFVTCHEITLDEALEKLTQETLHSSKQMVAVFADKDPQVMDTIECFMHGYVTWHLCDARYRLHEIYEKVKDQDTEDAKKFCKFFEQAANVGAVAPSEWAYPQVAQLANVRAKDDMKEAHKPILSSIELVE</sequence>
<name>TRI5_FUSAU</name>
<feature type="chain" id="PRO_0000221575" description="Trichodiene synthase">
    <location>
        <begin position="1"/>
        <end position="375"/>
    </location>
</feature>
<evidence type="ECO:0000305" key="1"/>
<proteinExistence type="inferred from homology"/>